<accession>P46277</accession>
<evidence type="ECO:0000256" key="1">
    <source>
        <dbReference type="SAM" id="MobiDB-lite"/>
    </source>
</evidence>
<evidence type="ECO:0000305" key="2"/>
<name>CCNB1_MEDSV</name>
<proteinExistence type="evidence at transcript level"/>
<protein>
    <recommendedName>
        <fullName>G2/mitotic-specific cyclin-1</fullName>
    </recommendedName>
    <alternativeName>
        <fullName>B-like cyclin</fullName>
    </alternativeName>
    <alternativeName>
        <fullName>CycMs1</fullName>
    </alternativeName>
</protein>
<organism>
    <name type="scientific">Medicago sativa subsp. varia</name>
    <name type="common">Alfalfa</name>
    <name type="synonym">Medicago varia</name>
    <dbReference type="NCBI Taxonomy" id="36902"/>
    <lineage>
        <taxon>Eukaryota</taxon>
        <taxon>Viridiplantae</taxon>
        <taxon>Streptophyta</taxon>
        <taxon>Embryophyta</taxon>
        <taxon>Tracheophyta</taxon>
        <taxon>Spermatophyta</taxon>
        <taxon>Magnoliopsida</taxon>
        <taxon>eudicotyledons</taxon>
        <taxon>Gunneridae</taxon>
        <taxon>Pentapetalae</taxon>
        <taxon>rosids</taxon>
        <taxon>fabids</taxon>
        <taxon>Fabales</taxon>
        <taxon>Fabaceae</taxon>
        <taxon>Papilionoideae</taxon>
        <taxon>50 kb inversion clade</taxon>
        <taxon>NPAAA clade</taxon>
        <taxon>Hologalegina</taxon>
        <taxon>IRL clade</taxon>
        <taxon>Trifolieae</taxon>
        <taxon>Medicago</taxon>
    </lineage>
</organism>
<reference key="1">
    <citation type="journal article" date="1995" name="Plant Cell">
        <title>cycMs3, a novel B-type alfalfa cyclin gene, is induced in the G0-to-G1 transition of the cell cycle.</title>
        <authorList>
            <person name="Meskiene I."/>
            <person name="Boegre L."/>
            <person name="Dahl M."/>
            <person name="Pirck M."/>
            <person name="Ha D.T.C."/>
            <person name="Swoboda I."/>
            <person name="Heberle-Bors E."/>
            <person name="Ammerer G."/>
            <person name="Hirt H."/>
        </authorList>
    </citation>
    <scope>NUCLEOTIDE SEQUENCE [MRNA]</scope>
    <source>
        <strain>cv. A2</strain>
    </source>
</reference>
<keyword id="KW-0131">Cell cycle</keyword>
<keyword id="KW-0132">Cell division</keyword>
<keyword id="KW-0195">Cyclin</keyword>
<keyword id="KW-0498">Mitosis</keyword>
<comment type="function">
    <text>Essential for the control of the cell cycle at the G2/M (mitosis) transition.</text>
</comment>
<comment type="subunit">
    <text>Interacts with the CDC2 protein kinase to form a serine/threonine kinase holoenzyme complex also known as maturation promoting factor (MPF). The cyclin subunit imparts substrate specificity to the complex.</text>
</comment>
<comment type="developmental stage">
    <text>Accumulates steadily during G2 and is abruptly destroyed at mitosis.</text>
</comment>
<comment type="similarity">
    <text evidence="2">Belongs to the cyclin family. Cyclin AB subfamily.</text>
</comment>
<feature type="chain" id="PRO_0000080394" description="G2/mitotic-specific cyclin-1">
    <location>
        <begin position="1"/>
        <end position="428"/>
    </location>
</feature>
<feature type="region of interest" description="Disordered" evidence="1">
    <location>
        <begin position="1"/>
        <end position="22"/>
    </location>
</feature>
<dbReference type="EMBL" id="X82039">
    <property type="protein sequence ID" value="CAA57559.1"/>
    <property type="molecule type" value="mRNA"/>
</dbReference>
<dbReference type="SMR" id="P46277"/>
<dbReference type="GO" id="GO:0016538">
    <property type="term" value="F:cyclin-dependent protein serine/threonine kinase regulator activity"/>
    <property type="evidence" value="ECO:0007669"/>
    <property type="project" value="InterPro"/>
</dbReference>
<dbReference type="GO" id="GO:0051301">
    <property type="term" value="P:cell division"/>
    <property type="evidence" value="ECO:0007669"/>
    <property type="project" value="UniProtKB-KW"/>
</dbReference>
<dbReference type="GO" id="GO:0044772">
    <property type="term" value="P:mitotic cell cycle phase transition"/>
    <property type="evidence" value="ECO:0007669"/>
    <property type="project" value="InterPro"/>
</dbReference>
<dbReference type="CDD" id="cd20567">
    <property type="entry name" value="CYCLIN_AtCycB-like_rpt1"/>
    <property type="match status" value="1"/>
</dbReference>
<dbReference type="CDD" id="cd20511">
    <property type="entry name" value="CYCLIN_AtCycB-like_rpt2"/>
    <property type="match status" value="1"/>
</dbReference>
<dbReference type="FunFam" id="1.10.472.10:FF:000032">
    <property type="entry name" value="G2/mitotic-specific cyclin-1"/>
    <property type="match status" value="1"/>
</dbReference>
<dbReference type="Gene3D" id="1.10.472.10">
    <property type="entry name" value="Cyclin-like"/>
    <property type="match status" value="2"/>
</dbReference>
<dbReference type="InterPro" id="IPR039361">
    <property type="entry name" value="Cyclin"/>
</dbReference>
<dbReference type="InterPro" id="IPR013763">
    <property type="entry name" value="Cyclin-like_dom"/>
</dbReference>
<dbReference type="InterPro" id="IPR036915">
    <property type="entry name" value="Cyclin-like_sf"/>
</dbReference>
<dbReference type="InterPro" id="IPR046965">
    <property type="entry name" value="Cyclin_A/B-like"/>
</dbReference>
<dbReference type="InterPro" id="IPR004367">
    <property type="entry name" value="Cyclin_C-dom"/>
</dbReference>
<dbReference type="InterPro" id="IPR006671">
    <property type="entry name" value="Cyclin_N"/>
</dbReference>
<dbReference type="InterPro" id="IPR048258">
    <property type="entry name" value="Cyclins_cyclin-box"/>
</dbReference>
<dbReference type="PANTHER" id="PTHR10177">
    <property type="entry name" value="CYCLINS"/>
    <property type="match status" value="1"/>
</dbReference>
<dbReference type="Pfam" id="PF02984">
    <property type="entry name" value="Cyclin_C"/>
    <property type="match status" value="1"/>
</dbReference>
<dbReference type="Pfam" id="PF00134">
    <property type="entry name" value="Cyclin_N"/>
    <property type="match status" value="1"/>
</dbReference>
<dbReference type="PIRSF" id="PIRSF001771">
    <property type="entry name" value="Cyclin_A_B_D_E"/>
    <property type="match status" value="1"/>
</dbReference>
<dbReference type="SMART" id="SM00385">
    <property type="entry name" value="CYCLIN"/>
    <property type="match status" value="2"/>
</dbReference>
<dbReference type="SMART" id="SM01332">
    <property type="entry name" value="Cyclin_C"/>
    <property type="match status" value="1"/>
</dbReference>
<dbReference type="SUPFAM" id="SSF47954">
    <property type="entry name" value="Cyclin-like"/>
    <property type="match status" value="2"/>
</dbReference>
<dbReference type="PROSITE" id="PS00292">
    <property type="entry name" value="CYCLINS"/>
    <property type="match status" value="1"/>
</dbReference>
<sequence>MKFSEEKNVSNNPTNFEGGLDSRKVGQNRRALGVINQNLVVEGRPYPCVVNKRALSERNDVCEKKQADPVHRPITRRFAAKIASTKTSNAEGTTKRSNLAKSSSNGFGDFIFVDDEHKPVEDQPVPMALEQTEPMHSESDQMEEVEMEDIMEEPVMDIDTPDANDPLAVAEYIEDLYSYYRKVESTSCVSPNYMAQQFDINERMRAILVDWLIEVHDKFDLMHETLFLTVNLIDRFLEKQSVVRKKLQLVGLVAMLLACKYEEVSVPVVGDLILISDRAYTRKEVLEMEKVMVNALKFNISVPTAYVFMRRFLKAAQADRKLELLAFFLIELSLVEYAMLKFSPSQLAAAAVYTAQCTMYGVKQWSKTCEWHTNYSEDQLLECSSLMVDFHKKAGTGKLTGAHRKYCTSKFSYTAKCEPASFLLENEL</sequence>